<comment type="subcellular location">
    <subcellularLocation>
        <location evidence="1">Membrane</location>
        <topology evidence="1">Multi-pass membrane protein</topology>
    </subcellularLocation>
</comment>
<comment type="alternative products">
    <event type="alternative splicing"/>
    <isoform>
        <id>Q8RXK1-1</id>
        <name>1</name>
        <sequence type="displayed"/>
    </isoform>
    <text>A number of isoforms are produced. According to EST sequences.</text>
</comment>
<comment type="similarity">
    <text evidence="4">Belongs to the multi antimicrobial extrusion (MATE) (TC 2.A.66.1) family.</text>
</comment>
<comment type="sequence caution" evidence="4">
    <conflict type="erroneous gene model prediction">
        <sequence resource="EMBL-CDS" id="AAF31293"/>
    </conflict>
</comment>
<organism>
    <name type="scientific">Arabidopsis thaliana</name>
    <name type="common">Mouse-ear cress</name>
    <dbReference type="NCBI Taxonomy" id="3702"/>
    <lineage>
        <taxon>Eukaryota</taxon>
        <taxon>Viridiplantae</taxon>
        <taxon>Streptophyta</taxon>
        <taxon>Embryophyta</taxon>
        <taxon>Tracheophyta</taxon>
        <taxon>Spermatophyta</taxon>
        <taxon>Magnoliopsida</taxon>
        <taxon>eudicotyledons</taxon>
        <taxon>Gunneridae</taxon>
        <taxon>Pentapetalae</taxon>
        <taxon>rosids</taxon>
        <taxon>malvids</taxon>
        <taxon>Brassicales</taxon>
        <taxon>Brassicaceae</taxon>
        <taxon>Camelineae</taxon>
        <taxon>Arabidopsis</taxon>
    </lineage>
</organism>
<keyword id="KW-0025">Alternative splicing</keyword>
<keyword id="KW-0472">Membrane</keyword>
<keyword id="KW-1185">Reference proteome</keyword>
<keyword id="KW-0812">Transmembrane</keyword>
<keyword id="KW-1133">Transmembrane helix</keyword>
<keyword id="KW-0813">Transport</keyword>
<feature type="chain" id="PRO_0000434064" description="Protein DETOXIFICATION 23">
    <location>
        <begin position="1"/>
        <end position="494"/>
    </location>
</feature>
<feature type="transmembrane region" description="Helical" evidence="1">
    <location>
        <begin position="40"/>
        <end position="60"/>
    </location>
</feature>
<feature type="transmembrane region" description="Helical" evidence="1">
    <location>
        <begin position="74"/>
        <end position="94"/>
    </location>
</feature>
<feature type="transmembrane region" description="Helical" evidence="1">
    <location>
        <begin position="123"/>
        <end position="143"/>
    </location>
</feature>
<feature type="transmembrane region" description="Helical" evidence="1">
    <location>
        <begin position="158"/>
        <end position="178"/>
    </location>
</feature>
<feature type="transmembrane region" description="Helical" evidence="1">
    <location>
        <begin position="188"/>
        <end position="208"/>
    </location>
</feature>
<feature type="transmembrane region" description="Helical" evidence="1">
    <location>
        <begin position="223"/>
        <end position="243"/>
    </location>
</feature>
<feature type="transmembrane region" description="Helical" evidence="1">
    <location>
        <begin position="268"/>
        <end position="288"/>
    </location>
</feature>
<feature type="transmembrane region" description="Helical" evidence="1">
    <location>
        <begin position="297"/>
        <end position="317"/>
    </location>
</feature>
<feature type="transmembrane region" description="Helical" evidence="1">
    <location>
        <begin position="340"/>
        <end position="360"/>
    </location>
</feature>
<feature type="transmembrane region" description="Helical" evidence="1">
    <location>
        <begin position="384"/>
        <end position="404"/>
    </location>
</feature>
<feature type="transmembrane region" description="Helical" evidence="1">
    <location>
        <begin position="416"/>
        <end position="436"/>
    </location>
</feature>
<feature type="transmembrane region" description="Helical" evidence="1">
    <location>
        <begin position="441"/>
        <end position="461"/>
    </location>
</feature>
<feature type="region of interest" description="Disordered" evidence="2">
    <location>
        <begin position="1"/>
        <end position="25"/>
    </location>
</feature>
<reference key="1">
    <citation type="journal article" date="2000" name="Nature">
        <title>Sequence and analysis of chromosome 1 of the plant Arabidopsis thaliana.</title>
        <authorList>
            <person name="Theologis A."/>
            <person name="Ecker J.R."/>
            <person name="Palm C.J."/>
            <person name="Federspiel N.A."/>
            <person name="Kaul S."/>
            <person name="White O."/>
            <person name="Alonso J."/>
            <person name="Altafi H."/>
            <person name="Araujo R."/>
            <person name="Bowman C.L."/>
            <person name="Brooks S.Y."/>
            <person name="Buehler E."/>
            <person name="Chan A."/>
            <person name="Chao Q."/>
            <person name="Chen H."/>
            <person name="Cheuk R.F."/>
            <person name="Chin C.W."/>
            <person name="Chung M.K."/>
            <person name="Conn L."/>
            <person name="Conway A.B."/>
            <person name="Conway A.R."/>
            <person name="Creasy T.H."/>
            <person name="Dewar K."/>
            <person name="Dunn P."/>
            <person name="Etgu P."/>
            <person name="Feldblyum T.V."/>
            <person name="Feng J.-D."/>
            <person name="Fong B."/>
            <person name="Fujii C.Y."/>
            <person name="Gill J.E."/>
            <person name="Goldsmith A.D."/>
            <person name="Haas B."/>
            <person name="Hansen N.F."/>
            <person name="Hughes B."/>
            <person name="Huizar L."/>
            <person name="Hunter J.L."/>
            <person name="Jenkins J."/>
            <person name="Johnson-Hopson C."/>
            <person name="Khan S."/>
            <person name="Khaykin E."/>
            <person name="Kim C.J."/>
            <person name="Koo H.L."/>
            <person name="Kremenetskaia I."/>
            <person name="Kurtz D.B."/>
            <person name="Kwan A."/>
            <person name="Lam B."/>
            <person name="Langin-Hooper S."/>
            <person name="Lee A."/>
            <person name="Lee J.M."/>
            <person name="Lenz C.A."/>
            <person name="Li J.H."/>
            <person name="Li Y.-P."/>
            <person name="Lin X."/>
            <person name="Liu S.X."/>
            <person name="Liu Z.A."/>
            <person name="Luros J.S."/>
            <person name="Maiti R."/>
            <person name="Marziali A."/>
            <person name="Militscher J."/>
            <person name="Miranda M."/>
            <person name="Nguyen M."/>
            <person name="Nierman W.C."/>
            <person name="Osborne B.I."/>
            <person name="Pai G."/>
            <person name="Peterson J."/>
            <person name="Pham P.K."/>
            <person name="Rizzo M."/>
            <person name="Rooney T."/>
            <person name="Rowley D."/>
            <person name="Sakano H."/>
            <person name="Salzberg S.L."/>
            <person name="Schwartz J.R."/>
            <person name="Shinn P."/>
            <person name="Southwick A.M."/>
            <person name="Sun H."/>
            <person name="Tallon L.J."/>
            <person name="Tambunga G."/>
            <person name="Toriumi M.J."/>
            <person name="Town C.D."/>
            <person name="Utterback T."/>
            <person name="Van Aken S."/>
            <person name="Vaysberg M."/>
            <person name="Vysotskaia V.S."/>
            <person name="Walker M."/>
            <person name="Wu D."/>
            <person name="Yu G."/>
            <person name="Fraser C.M."/>
            <person name="Venter J.C."/>
            <person name="Davis R.W."/>
        </authorList>
    </citation>
    <scope>NUCLEOTIDE SEQUENCE [LARGE SCALE GENOMIC DNA]</scope>
    <source>
        <strain>cv. Columbia</strain>
    </source>
</reference>
<reference key="2">
    <citation type="journal article" date="2017" name="Plant J.">
        <title>Araport11: a complete reannotation of the Arabidopsis thaliana reference genome.</title>
        <authorList>
            <person name="Cheng C.Y."/>
            <person name="Krishnakumar V."/>
            <person name="Chan A.P."/>
            <person name="Thibaud-Nissen F."/>
            <person name="Schobel S."/>
            <person name="Town C.D."/>
        </authorList>
    </citation>
    <scope>GENOME REANNOTATION</scope>
    <source>
        <strain>cv. Columbia</strain>
    </source>
</reference>
<reference key="3">
    <citation type="journal article" date="2003" name="Science">
        <title>Empirical analysis of transcriptional activity in the Arabidopsis genome.</title>
        <authorList>
            <person name="Yamada K."/>
            <person name="Lim J."/>
            <person name="Dale J.M."/>
            <person name="Chen H."/>
            <person name="Shinn P."/>
            <person name="Palm C.J."/>
            <person name="Southwick A.M."/>
            <person name="Wu H.C."/>
            <person name="Kim C.J."/>
            <person name="Nguyen M."/>
            <person name="Pham P.K."/>
            <person name="Cheuk R.F."/>
            <person name="Karlin-Newmann G."/>
            <person name="Liu S.X."/>
            <person name="Lam B."/>
            <person name="Sakano H."/>
            <person name="Wu T."/>
            <person name="Yu G."/>
            <person name="Miranda M."/>
            <person name="Quach H.L."/>
            <person name="Tripp M."/>
            <person name="Chang C.H."/>
            <person name="Lee J.M."/>
            <person name="Toriumi M.J."/>
            <person name="Chan M.M."/>
            <person name="Tang C.C."/>
            <person name="Onodera C.S."/>
            <person name="Deng J.M."/>
            <person name="Akiyama K."/>
            <person name="Ansari Y."/>
            <person name="Arakawa T."/>
            <person name="Banh J."/>
            <person name="Banno F."/>
            <person name="Bowser L."/>
            <person name="Brooks S.Y."/>
            <person name="Carninci P."/>
            <person name="Chao Q."/>
            <person name="Choy N."/>
            <person name="Enju A."/>
            <person name="Goldsmith A.D."/>
            <person name="Gurjal M."/>
            <person name="Hansen N.F."/>
            <person name="Hayashizaki Y."/>
            <person name="Johnson-Hopson C."/>
            <person name="Hsuan V.W."/>
            <person name="Iida K."/>
            <person name="Karnes M."/>
            <person name="Khan S."/>
            <person name="Koesema E."/>
            <person name="Ishida J."/>
            <person name="Jiang P.X."/>
            <person name="Jones T."/>
            <person name="Kawai J."/>
            <person name="Kamiya A."/>
            <person name="Meyers C."/>
            <person name="Nakajima M."/>
            <person name="Narusaka M."/>
            <person name="Seki M."/>
            <person name="Sakurai T."/>
            <person name="Satou M."/>
            <person name="Tamse R."/>
            <person name="Vaysberg M."/>
            <person name="Wallender E.K."/>
            <person name="Wong C."/>
            <person name="Yamamura Y."/>
            <person name="Yuan S."/>
            <person name="Shinozaki K."/>
            <person name="Davis R.W."/>
            <person name="Theologis A."/>
            <person name="Ecker J.R."/>
        </authorList>
    </citation>
    <scope>NUCLEOTIDE SEQUENCE [LARGE SCALE MRNA]</scope>
    <source>
        <strain>cv. Columbia</strain>
    </source>
</reference>
<reference key="4">
    <citation type="journal article" date="2002" name="J. Biol. Chem.">
        <title>Functional cloning and characterization of a plant efflux carrier for multidrug and heavy metal detoxification.</title>
        <authorList>
            <person name="Li L."/>
            <person name="He Z."/>
            <person name="Pandey G.K."/>
            <person name="Tsuchiya T."/>
            <person name="Luan S."/>
        </authorList>
    </citation>
    <scope>GENE FAMILY</scope>
    <scope>NOMENCLATURE</scope>
</reference>
<reference key="5">
    <citation type="journal article" date="2003" name="Eur. J. Biochem.">
        <title>The multidrug/oligosaccharidyl-lipid/polysaccharide (MOP) exporter superfamily.</title>
        <authorList>
            <person name="Hvorup R.N."/>
            <person name="Winnen B."/>
            <person name="Chang A.B."/>
            <person name="Jiang Y."/>
            <person name="Zhou X.F."/>
            <person name="Saier M.H. Jr."/>
        </authorList>
    </citation>
    <scope>GENE FAMILY</scope>
</reference>
<evidence type="ECO:0000255" key="1"/>
<evidence type="ECO:0000256" key="2">
    <source>
        <dbReference type="SAM" id="MobiDB-lite"/>
    </source>
</evidence>
<evidence type="ECO:0000303" key="3">
    <source>
    </source>
</evidence>
<evidence type="ECO:0000305" key="4"/>
<evidence type="ECO:0000312" key="5">
    <source>
        <dbReference type="Araport" id="AT1G33080"/>
    </source>
</evidence>
<evidence type="ECO:0000312" key="6">
    <source>
        <dbReference type="EMBL" id="AAF31293.1"/>
    </source>
</evidence>
<evidence type="ECO:0000312" key="7">
    <source>
        <dbReference type="EMBL" id="AC021045"/>
    </source>
</evidence>
<dbReference type="EMBL" id="AC006424">
    <property type="protein sequence ID" value="AAF31293.1"/>
    <property type="status" value="ALT_SEQ"/>
    <property type="molecule type" value="Genomic_DNA"/>
</dbReference>
<dbReference type="EMBL" id="AC021045">
    <property type="status" value="NOT_ANNOTATED_CDS"/>
    <property type="molecule type" value="Genomic_DNA"/>
</dbReference>
<dbReference type="EMBL" id="CP002684">
    <property type="protein sequence ID" value="AEE31561.1"/>
    <property type="molecule type" value="Genomic_DNA"/>
</dbReference>
<dbReference type="EMBL" id="AY080844">
    <property type="protein sequence ID" value="AAL87319.1"/>
    <property type="molecule type" value="mRNA"/>
</dbReference>
<dbReference type="EMBL" id="AY133850">
    <property type="protein sequence ID" value="AAM91784.1"/>
    <property type="molecule type" value="mRNA"/>
</dbReference>
<dbReference type="RefSeq" id="NP_174584.2">
    <molecule id="Q8RXK1-1"/>
    <property type="nucleotide sequence ID" value="NM_103042.6"/>
</dbReference>
<dbReference type="SMR" id="Q8RXK1"/>
<dbReference type="IntAct" id="Q8RXK1">
    <property type="interactions" value="27"/>
</dbReference>
<dbReference type="STRING" id="3702.Q8RXK1"/>
<dbReference type="PaxDb" id="3702-AT1G33080.1"/>
<dbReference type="ProteomicsDB" id="221827">
    <molecule id="Q8RXK1-1"/>
</dbReference>
<dbReference type="EnsemblPlants" id="AT1G33080.1">
    <molecule id="Q8RXK1-1"/>
    <property type="protein sequence ID" value="AT1G33080.1"/>
    <property type="gene ID" value="AT1G33080"/>
</dbReference>
<dbReference type="GeneID" id="840204"/>
<dbReference type="Gramene" id="AT1G33080.1">
    <molecule id="Q8RXK1-1"/>
    <property type="protein sequence ID" value="AT1G33080.1"/>
    <property type="gene ID" value="AT1G33080"/>
</dbReference>
<dbReference type="KEGG" id="ath:AT1G33080"/>
<dbReference type="Araport" id="AT1G33080"/>
<dbReference type="TAIR" id="AT1G33080"/>
<dbReference type="eggNOG" id="KOG1347">
    <property type="taxonomic scope" value="Eukaryota"/>
</dbReference>
<dbReference type="InParanoid" id="Q8RXK1"/>
<dbReference type="OMA" id="TMMASHI"/>
<dbReference type="PhylomeDB" id="Q8RXK1"/>
<dbReference type="PRO" id="PR:Q8RXK1"/>
<dbReference type="Proteomes" id="UP000006548">
    <property type="component" value="Chromosome 1"/>
</dbReference>
<dbReference type="ExpressionAtlas" id="Q8RXK1">
    <property type="expression patterns" value="baseline and differential"/>
</dbReference>
<dbReference type="GO" id="GO:0016020">
    <property type="term" value="C:membrane"/>
    <property type="evidence" value="ECO:0007669"/>
    <property type="project" value="UniProtKB-SubCell"/>
</dbReference>
<dbReference type="GO" id="GO:0015297">
    <property type="term" value="F:antiporter activity"/>
    <property type="evidence" value="ECO:0007669"/>
    <property type="project" value="InterPro"/>
</dbReference>
<dbReference type="GO" id="GO:0042910">
    <property type="term" value="F:xenobiotic transmembrane transporter activity"/>
    <property type="evidence" value="ECO:0007669"/>
    <property type="project" value="InterPro"/>
</dbReference>
<dbReference type="GO" id="GO:1990961">
    <property type="term" value="P:xenobiotic detoxification by transmembrane export across the plasma membrane"/>
    <property type="evidence" value="ECO:0007669"/>
    <property type="project" value="InterPro"/>
</dbReference>
<dbReference type="CDD" id="cd13132">
    <property type="entry name" value="MATE_eukaryotic"/>
    <property type="match status" value="1"/>
</dbReference>
<dbReference type="InterPro" id="IPR045069">
    <property type="entry name" value="MATE_euk"/>
</dbReference>
<dbReference type="InterPro" id="IPR002528">
    <property type="entry name" value="MATE_fam"/>
</dbReference>
<dbReference type="NCBIfam" id="TIGR00797">
    <property type="entry name" value="matE"/>
    <property type="match status" value="1"/>
</dbReference>
<dbReference type="PANTHER" id="PTHR11206">
    <property type="entry name" value="MULTIDRUG RESISTANCE PROTEIN"/>
    <property type="match status" value="1"/>
</dbReference>
<dbReference type="Pfam" id="PF01554">
    <property type="entry name" value="MatE"/>
    <property type="match status" value="2"/>
</dbReference>
<sequence length="494" mass="54184">MARREGEVTETLLKKSTENRGEDRDGLGMKEKVWRESKKLWVVAGPAIFTRFSTSGLSLISQAFIGHLGSTELAAYSITLTVLLRFSNGILLGMASALETLCGQAYGAKQYHMLGIYLQRSWIVLTGCTICLMPIYIFAGPILLALGQEERLVRVARIIALWVIGINISFVPSFTCQMFLQAQSKNKIIAYVAAVSLGVHVFLSWLLVVHFDFGIAGAMTSSLVAHWLPNIAQVLFVTCGGCTETWRGFSWLAFKDLWPVFKLSVSSGGMICLELWYNSILILLTGNLKNAEVALNALAICININALEMMVAFGFMAAASVRVSNEIGSGNSNGAKFATMVVVSTSLSIGIIFFFIFLFLRERVSYIFTTSEAVATQVADLSPLLAFSILLNSIQPVLSGVAVGAGWQKYVTVVNLACYYLVGIPSGLFLGYVVGLQVKGVWLGMIFGIFVQTCVLTVMTMRTDWDQQVSSSLKRLNRWVEPESPSRNQTLQNE</sequence>
<name>DTX23_ARATH</name>
<accession>Q8RXK1</accession>
<accession>Q9MAN6</accession>
<gene>
    <name evidence="3" type="primary">DTX23</name>
    <name evidence="5" type="ordered locus">At1g33080</name>
    <name evidence="6" type="ORF">F9L11.22</name>
    <name evidence="7" type="ORF">T9L6.14</name>
</gene>
<protein>
    <recommendedName>
        <fullName evidence="3">Protein DETOXIFICATION 23</fullName>
        <shortName evidence="3">AtDTX23</shortName>
    </recommendedName>
    <alternativeName>
        <fullName evidence="4">Multidrug and toxic compound extrusion protein 23</fullName>
        <shortName evidence="4">MATE protein 23</shortName>
    </alternativeName>
</protein>
<proteinExistence type="evidence at transcript level"/>